<organism>
    <name type="scientific">Medicago sativa</name>
    <name type="common">Alfalfa</name>
    <dbReference type="NCBI Taxonomy" id="3879"/>
    <lineage>
        <taxon>Eukaryota</taxon>
        <taxon>Viridiplantae</taxon>
        <taxon>Streptophyta</taxon>
        <taxon>Embryophyta</taxon>
        <taxon>Tracheophyta</taxon>
        <taxon>Spermatophyta</taxon>
        <taxon>Magnoliopsida</taxon>
        <taxon>eudicotyledons</taxon>
        <taxon>Gunneridae</taxon>
        <taxon>Pentapetalae</taxon>
        <taxon>rosids</taxon>
        <taxon>fabids</taxon>
        <taxon>Fabales</taxon>
        <taxon>Fabaceae</taxon>
        <taxon>Papilionoideae</taxon>
        <taxon>50 kb inversion clade</taxon>
        <taxon>NPAAA clade</taxon>
        <taxon>Hologalegina</taxon>
        <taxon>IRL clade</taxon>
        <taxon>Trifolieae</taxon>
        <taxon>Medicago</taxon>
    </lineage>
</organism>
<dbReference type="EC" id="1.1.1.195" evidence="1"/>
<dbReference type="EMBL" id="Z19573">
    <property type="protein sequence ID" value="CAA79625.1"/>
    <property type="molecule type" value="mRNA"/>
</dbReference>
<dbReference type="EMBL" id="AF083332">
    <property type="protein sequence ID" value="AAC35845.1"/>
    <property type="molecule type" value="mRNA"/>
</dbReference>
<dbReference type="PIR" id="S31572">
    <property type="entry name" value="S31572"/>
</dbReference>
<dbReference type="SMR" id="P31656"/>
<dbReference type="UniPathway" id="UPA00711"/>
<dbReference type="GO" id="GO:0045551">
    <property type="term" value="F:cinnamyl-alcohol dehydrogenase activity"/>
    <property type="evidence" value="ECO:0007669"/>
    <property type="project" value="UniProtKB-EC"/>
</dbReference>
<dbReference type="GO" id="GO:0050268">
    <property type="term" value="F:coniferyl-alcohol dehydrogenase activity"/>
    <property type="evidence" value="ECO:0007669"/>
    <property type="project" value="RHEA"/>
</dbReference>
<dbReference type="GO" id="GO:0008270">
    <property type="term" value="F:zinc ion binding"/>
    <property type="evidence" value="ECO:0007669"/>
    <property type="project" value="InterPro"/>
</dbReference>
<dbReference type="GO" id="GO:0009809">
    <property type="term" value="P:lignin biosynthetic process"/>
    <property type="evidence" value="ECO:0007669"/>
    <property type="project" value="UniProtKB-KW"/>
</dbReference>
<dbReference type="CDD" id="cd05283">
    <property type="entry name" value="CAD1"/>
    <property type="match status" value="1"/>
</dbReference>
<dbReference type="FunFam" id="3.40.50.720:FF:000022">
    <property type="entry name" value="Cinnamyl alcohol dehydrogenase"/>
    <property type="match status" value="1"/>
</dbReference>
<dbReference type="FunFam" id="3.90.180.10:FF:000004">
    <property type="entry name" value="probable cinnamyl alcohol dehydrogenase"/>
    <property type="match status" value="1"/>
</dbReference>
<dbReference type="FunFam" id="3.90.180.10:FF:000100">
    <property type="entry name" value="Putative cinnamyl alcohol dehydrogenase 6"/>
    <property type="match status" value="1"/>
</dbReference>
<dbReference type="Gene3D" id="3.90.180.10">
    <property type="entry name" value="Medium-chain alcohol dehydrogenases, catalytic domain"/>
    <property type="match status" value="1"/>
</dbReference>
<dbReference type="Gene3D" id="3.40.50.720">
    <property type="entry name" value="NAD(P)-binding Rossmann-like Domain"/>
    <property type="match status" value="1"/>
</dbReference>
<dbReference type="InterPro" id="IPR013149">
    <property type="entry name" value="ADH-like_C"/>
</dbReference>
<dbReference type="InterPro" id="IPR013154">
    <property type="entry name" value="ADH-like_N"/>
</dbReference>
<dbReference type="InterPro" id="IPR002328">
    <property type="entry name" value="ADH_Zn_CS"/>
</dbReference>
<dbReference type="InterPro" id="IPR047109">
    <property type="entry name" value="CAD-like"/>
</dbReference>
<dbReference type="InterPro" id="IPR011032">
    <property type="entry name" value="GroES-like_sf"/>
</dbReference>
<dbReference type="InterPro" id="IPR036291">
    <property type="entry name" value="NAD(P)-bd_dom_sf"/>
</dbReference>
<dbReference type="InterPro" id="IPR020843">
    <property type="entry name" value="PKS_ER"/>
</dbReference>
<dbReference type="PANTHER" id="PTHR42683">
    <property type="entry name" value="ALDEHYDE REDUCTASE"/>
    <property type="match status" value="1"/>
</dbReference>
<dbReference type="Pfam" id="PF08240">
    <property type="entry name" value="ADH_N"/>
    <property type="match status" value="1"/>
</dbReference>
<dbReference type="Pfam" id="PF00107">
    <property type="entry name" value="ADH_zinc_N"/>
    <property type="match status" value="1"/>
</dbReference>
<dbReference type="SMART" id="SM00829">
    <property type="entry name" value="PKS_ER"/>
    <property type="match status" value="1"/>
</dbReference>
<dbReference type="SUPFAM" id="SSF50129">
    <property type="entry name" value="GroES-like"/>
    <property type="match status" value="1"/>
</dbReference>
<dbReference type="SUPFAM" id="SSF51735">
    <property type="entry name" value="NAD(P)-binding Rossmann-fold domains"/>
    <property type="match status" value="1"/>
</dbReference>
<dbReference type="PROSITE" id="PS00059">
    <property type="entry name" value="ADH_ZINC"/>
    <property type="match status" value="1"/>
</dbReference>
<reference key="1">
    <citation type="journal article" date="1995" name="Plant Physiol. Biochem.">
        <title>Isolation of cinnamyl alcohol dehydrogenase cDNAs from two important economic species: alfalfa and poplar. Demonstration of a high homology of the gene within angiosperms.</title>
        <authorList>
            <person name="van Doorsselaere J."/>
            <person name="Baucher M."/>
            <person name="Feuillet C."/>
            <person name="Boudet A.M."/>
            <person name="van Montagu M."/>
            <person name="Inze D."/>
        </authorList>
    </citation>
    <scope>NUCLEOTIDE SEQUENCE [MRNA]</scope>
    <source>
        <strain>cv. Apollo</strain>
    </source>
</reference>
<reference key="2">
    <citation type="journal article" date="1999" name="Plant Mol. Biol.">
        <title>Molecular characterization and expression of a wound-inducible cDNA encoding a novel cinnamyl-alcohol dehydrogenase enzyme in lucerne (Medicago sativa L.).</title>
        <authorList>
            <person name="Brill E.M."/>
            <person name="Abrahams S."/>
            <person name="Hayes C.M."/>
            <person name="Jenkins C.L."/>
            <person name="Watson J.M."/>
        </authorList>
    </citation>
    <scope>NUCLEOTIDE SEQUENCE [MRNA]</scope>
    <scope>CHARACTERIZATION</scope>
    <source>
        <strain>cv. Siriver</strain>
        <tissue>Stem</tissue>
    </source>
</reference>
<proteinExistence type="evidence at protein level"/>
<comment type="function">
    <text evidence="3">This protein catalyzes the final step in a branch of phenylpropanoid synthesis specific for production of lignin monomers. It acts on coniferyl-, sinapyl-, 4-coumaryl- and cinnamyl-alcohol.</text>
</comment>
<comment type="catalytic activity">
    <reaction evidence="1">
        <text>(E)-cinnamyl alcohol + NADP(+) = (E)-cinnamaldehyde + NADPH + H(+)</text>
        <dbReference type="Rhea" id="RHEA:10392"/>
        <dbReference type="ChEBI" id="CHEBI:15378"/>
        <dbReference type="ChEBI" id="CHEBI:16731"/>
        <dbReference type="ChEBI" id="CHEBI:33227"/>
        <dbReference type="ChEBI" id="CHEBI:57783"/>
        <dbReference type="ChEBI" id="CHEBI:58349"/>
        <dbReference type="EC" id="1.1.1.195"/>
    </reaction>
    <physiologicalReaction direction="right-to-left" evidence="1">
        <dbReference type="Rhea" id="RHEA:10394"/>
    </physiologicalReaction>
</comment>
<comment type="catalytic activity">
    <reaction evidence="1">
        <text>(E)-coniferol + NADP(+) = (E)-coniferaldehyde + NADPH + H(+)</text>
        <dbReference type="Rhea" id="RHEA:22444"/>
        <dbReference type="ChEBI" id="CHEBI:15378"/>
        <dbReference type="ChEBI" id="CHEBI:16547"/>
        <dbReference type="ChEBI" id="CHEBI:17745"/>
        <dbReference type="ChEBI" id="CHEBI:57783"/>
        <dbReference type="ChEBI" id="CHEBI:58349"/>
        <dbReference type="EC" id="1.1.1.195"/>
    </reaction>
    <physiologicalReaction direction="right-to-left" evidence="1">
        <dbReference type="Rhea" id="RHEA:22446"/>
    </physiologicalReaction>
</comment>
<comment type="catalytic activity">
    <reaction evidence="1">
        <text>(E)-sinapyl alcohol + NADP(+) = (E)-sinapaldehyde + NADPH + H(+)</text>
        <dbReference type="Rhea" id="RHEA:45704"/>
        <dbReference type="ChEBI" id="CHEBI:15378"/>
        <dbReference type="ChEBI" id="CHEBI:27949"/>
        <dbReference type="ChEBI" id="CHEBI:57783"/>
        <dbReference type="ChEBI" id="CHEBI:58349"/>
        <dbReference type="ChEBI" id="CHEBI:64557"/>
        <dbReference type="EC" id="1.1.1.195"/>
    </reaction>
    <physiologicalReaction direction="right-to-left" evidence="1">
        <dbReference type="Rhea" id="RHEA:45706"/>
    </physiologicalReaction>
</comment>
<comment type="catalytic activity">
    <reaction evidence="1">
        <text>(E)-4-coumaroyl alcohol + NADP(+) = (E)-4-coumaraldehyde + NADPH + H(+)</text>
        <dbReference type="Rhea" id="RHEA:45724"/>
        <dbReference type="ChEBI" id="CHEBI:15378"/>
        <dbReference type="ChEBI" id="CHEBI:28353"/>
        <dbReference type="ChEBI" id="CHEBI:57783"/>
        <dbReference type="ChEBI" id="CHEBI:58349"/>
        <dbReference type="ChEBI" id="CHEBI:64555"/>
        <dbReference type="EC" id="1.1.1.195"/>
    </reaction>
    <physiologicalReaction direction="right-to-left" evidence="1">
        <dbReference type="Rhea" id="RHEA:45726"/>
    </physiologicalReaction>
</comment>
<comment type="catalytic activity">
    <reaction evidence="1">
        <text>(E)-caffeyl alcohol + NADP(+) = (E)-caffeyl aldehyde + NADPH + H(+)</text>
        <dbReference type="Rhea" id="RHEA:45728"/>
        <dbReference type="ChEBI" id="CHEBI:15378"/>
        <dbReference type="ChEBI" id="CHEBI:28323"/>
        <dbReference type="ChEBI" id="CHEBI:31334"/>
        <dbReference type="ChEBI" id="CHEBI:57783"/>
        <dbReference type="ChEBI" id="CHEBI:58349"/>
    </reaction>
    <physiologicalReaction direction="right-to-left" evidence="1">
        <dbReference type="Rhea" id="RHEA:45730"/>
    </physiologicalReaction>
</comment>
<comment type="cofactor">
    <cofactor evidence="1">
        <name>Zn(2+)</name>
        <dbReference type="ChEBI" id="CHEBI:29105"/>
    </cofactor>
    <text evidence="1">Binds 2 Zn(2+) ions per subunit.</text>
</comment>
<comment type="pathway">
    <text evidence="1">Aromatic compound metabolism; phenylpropanoid biosynthesis.</text>
</comment>
<comment type="subunit">
    <text evidence="1">Homodimer.</text>
</comment>
<comment type="tissue specificity">
    <text>Most actively expressed in stem, hypocotyl and root tissue.</text>
</comment>
<comment type="similarity">
    <text evidence="2">Belongs to the zinc-containing alcohol dehydrogenase family.</text>
</comment>
<protein>
    <recommendedName>
        <fullName>Probable cinnamyl alcohol dehydrogenase</fullName>
        <shortName>CAD</shortName>
        <ecNumber evidence="1">1.1.1.195</ecNumber>
    </recommendedName>
</protein>
<name>CADH_MEDSA</name>
<gene>
    <name type="primary">CAD2</name>
</gene>
<evidence type="ECO:0000250" key="1">
    <source>
        <dbReference type="UniProtKB" id="O49482"/>
    </source>
</evidence>
<evidence type="ECO:0000305" key="2"/>
<evidence type="ECO:0000305" key="3">
    <source>
    </source>
</evidence>
<sequence>MGSIEAAERTTVGLAAKDPSGILTPYTYTLRNTGPDDVYIKIHYCGVCHSDLHQIKNDLGMSNYPMVPGHEVVGEVLEVGSNVTRFKVGEIVGVGLLVGCCKSCRACDSEIEQYCNKKIWSYNDVYTDGKITQGGFAESTVVEQKFVVKIPEGLAPEQVAPLLCAGVTVYSPLSHFGLKTPGLRGGILGLGGVGHMGVKVAKALGHHVTVISSSDKKKKEALEDLGADNYLVSSDTVGMQEAADSLDYIIDTVPVGHPLEPYLSLLKIDGKLILMGVINTPLQFVTPMVMLGRKSITGSFVGSVKETEEMLEFWKEKGLTSMIEIVTMDYINKAFERLEKNDVRYRFVVDVKGSKFEE</sequence>
<keyword id="KW-0438">Lignin biosynthesis</keyword>
<keyword id="KW-0479">Metal-binding</keyword>
<keyword id="KW-0521">NADP</keyword>
<keyword id="KW-0560">Oxidoreductase</keyword>
<keyword id="KW-0862">Zinc</keyword>
<feature type="chain" id="PRO_0000160798" description="Probable cinnamyl alcohol dehydrogenase">
    <location>
        <begin position="1"/>
        <end position="358"/>
    </location>
</feature>
<feature type="binding site" evidence="1">
    <location>
        <position position="48"/>
    </location>
    <ligand>
        <name>Zn(2+)</name>
        <dbReference type="ChEBI" id="CHEBI:29105"/>
        <label>1</label>
        <note>catalytic</note>
    </ligand>
</feature>
<feature type="binding site" evidence="1">
    <location>
        <position position="50"/>
    </location>
    <ligand>
        <name>NADP(+)</name>
        <dbReference type="ChEBI" id="CHEBI:58349"/>
    </ligand>
</feature>
<feature type="binding site" evidence="1">
    <location>
        <position position="70"/>
    </location>
    <ligand>
        <name>Zn(2+)</name>
        <dbReference type="ChEBI" id="CHEBI:29105"/>
        <label>1</label>
        <note>catalytic</note>
    </ligand>
</feature>
<feature type="binding site" evidence="1">
    <location>
        <position position="71"/>
    </location>
    <ligand>
        <name>Zn(2+)</name>
        <dbReference type="ChEBI" id="CHEBI:29105"/>
        <label>1</label>
        <note>catalytic</note>
    </ligand>
</feature>
<feature type="binding site" evidence="1">
    <location>
        <position position="101"/>
    </location>
    <ligand>
        <name>Zn(2+)</name>
        <dbReference type="ChEBI" id="CHEBI:29105"/>
        <label>2</label>
    </ligand>
</feature>
<feature type="binding site" evidence="1">
    <location>
        <position position="104"/>
    </location>
    <ligand>
        <name>Zn(2+)</name>
        <dbReference type="ChEBI" id="CHEBI:29105"/>
        <label>2</label>
    </ligand>
</feature>
<feature type="binding site" evidence="1">
    <location>
        <position position="107"/>
    </location>
    <ligand>
        <name>Zn(2+)</name>
        <dbReference type="ChEBI" id="CHEBI:29105"/>
        <label>2</label>
    </ligand>
</feature>
<feature type="binding site" evidence="1">
    <location>
        <position position="115"/>
    </location>
    <ligand>
        <name>Zn(2+)</name>
        <dbReference type="ChEBI" id="CHEBI:29105"/>
        <label>2</label>
    </ligand>
</feature>
<feature type="binding site" evidence="1">
    <location>
        <position position="164"/>
    </location>
    <ligand>
        <name>Zn(2+)</name>
        <dbReference type="ChEBI" id="CHEBI:29105"/>
        <label>1</label>
        <note>catalytic</note>
    </ligand>
</feature>
<feature type="binding site" evidence="1">
    <location>
        <position position="168"/>
    </location>
    <ligand>
        <name>NADP(+)</name>
        <dbReference type="ChEBI" id="CHEBI:58349"/>
    </ligand>
</feature>
<feature type="binding site" evidence="1">
    <location>
        <begin position="189"/>
        <end position="194"/>
    </location>
    <ligand>
        <name>NADP(+)</name>
        <dbReference type="ChEBI" id="CHEBI:58349"/>
    </ligand>
</feature>
<feature type="binding site" evidence="1">
    <location>
        <begin position="212"/>
        <end position="217"/>
    </location>
    <ligand>
        <name>NADP(+)</name>
        <dbReference type="ChEBI" id="CHEBI:58349"/>
    </ligand>
</feature>
<feature type="binding site" evidence="1">
    <location>
        <position position="252"/>
    </location>
    <ligand>
        <name>NADP(+)</name>
        <dbReference type="ChEBI" id="CHEBI:58349"/>
    </ligand>
</feature>
<feature type="binding site" evidence="1">
    <location>
        <position position="276"/>
    </location>
    <ligand>
        <name>NADP(+)</name>
        <dbReference type="ChEBI" id="CHEBI:58349"/>
    </ligand>
</feature>
<feature type="binding site" evidence="1">
    <location>
        <begin position="299"/>
        <end position="301"/>
    </location>
    <ligand>
        <name>NADP(+)</name>
        <dbReference type="ChEBI" id="CHEBI:58349"/>
    </ligand>
</feature>
<accession>P31656</accession>